<protein>
    <recommendedName>
        <fullName evidence="1">Glutamyl-tRNA reductase</fullName>
        <shortName evidence="1">GluTR</shortName>
        <ecNumber evidence="1">1.2.1.70</ecNumber>
    </recommendedName>
</protein>
<name>HEM1_SULNB</name>
<reference key="1">
    <citation type="journal article" date="2007" name="Proc. Natl. Acad. Sci. U.S.A.">
        <title>Deep-sea vent epsilon-proteobacterial genomes provide insights into emergence of pathogens.</title>
        <authorList>
            <person name="Nakagawa S."/>
            <person name="Takaki Y."/>
            <person name="Shimamura S."/>
            <person name="Reysenbach A.-L."/>
            <person name="Takai K."/>
            <person name="Horikoshi K."/>
        </authorList>
    </citation>
    <scope>NUCLEOTIDE SEQUENCE [LARGE SCALE GENOMIC DNA]</scope>
    <source>
        <strain>NBC37-1</strain>
    </source>
</reference>
<gene>
    <name evidence="1" type="primary">hemA</name>
    <name type="ordered locus">SUN_0638</name>
</gene>
<sequence length="435" mass="49507">MYYQIVSFSHKNCEQSMREKLAFPNDEEKATFLEQLTGFEFVHEAFIISTCNRVEIVMATRDNFSSYHAVLGLMSQKGGLNFYELKSTAKRYDDEEAIEHIFSVVSSLDSLVIGESQITGQVKEAFRFSFQHGTAGRRLNRVLSYAVKCAAEVRNATNISQNPISIASVAVAQAHKLLGDNIQGMKGIVVGAGDMGVLAAKHLLRVGCDVVLIGRDLDKVQTVADSLGEDVKADTMENLTKYINRYRLLFSATSSPEPVITGDLIENETLPRQWFDMAIPRDIEDMELEKLQLFRIDDLRAISNDNHAMREEQAVRANEIVERYTEEFYAWLKALSIEPVIKQMRQHVSAAIEKEMQRALKKGFVPKEYESNMRKMAEQMFNRFLHDPTQNLRASSTESKNTNCIESVKKMFNIDTEHVDFKQYKNDHHTKGYSA</sequence>
<evidence type="ECO:0000255" key="1">
    <source>
        <dbReference type="HAMAP-Rule" id="MF_00087"/>
    </source>
</evidence>
<accession>A6Q7Y8</accession>
<feature type="chain" id="PRO_1000057583" description="Glutamyl-tRNA reductase">
    <location>
        <begin position="1"/>
        <end position="435"/>
    </location>
</feature>
<feature type="active site" description="Nucleophile" evidence="1">
    <location>
        <position position="51"/>
    </location>
</feature>
<feature type="binding site" evidence="1">
    <location>
        <begin position="50"/>
        <end position="53"/>
    </location>
    <ligand>
        <name>substrate</name>
    </ligand>
</feature>
<feature type="binding site" evidence="1">
    <location>
        <position position="110"/>
    </location>
    <ligand>
        <name>substrate</name>
    </ligand>
</feature>
<feature type="binding site" evidence="1">
    <location>
        <begin position="115"/>
        <end position="117"/>
    </location>
    <ligand>
        <name>substrate</name>
    </ligand>
</feature>
<feature type="binding site" evidence="1">
    <location>
        <position position="121"/>
    </location>
    <ligand>
        <name>substrate</name>
    </ligand>
</feature>
<feature type="binding site" evidence="1">
    <location>
        <begin position="191"/>
        <end position="196"/>
    </location>
    <ligand>
        <name>NADP(+)</name>
        <dbReference type="ChEBI" id="CHEBI:58349"/>
    </ligand>
</feature>
<feature type="site" description="Important for activity" evidence="1">
    <location>
        <position position="100"/>
    </location>
</feature>
<proteinExistence type="inferred from homology"/>
<keyword id="KW-0521">NADP</keyword>
<keyword id="KW-0560">Oxidoreductase</keyword>
<keyword id="KW-0627">Porphyrin biosynthesis</keyword>
<comment type="function">
    <text evidence="1">Catalyzes the NADPH-dependent reduction of glutamyl-tRNA(Glu) to glutamate 1-semialdehyde (GSA).</text>
</comment>
<comment type="catalytic activity">
    <reaction evidence="1">
        <text>(S)-4-amino-5-oxopentanoate + tRNA(Glu) + NADP(+) = L-glutamyl-tRNA(Glu) + NADPH + H(+)</text>
        <dbReference type="Rhea" id="RHEA:12344"/>
        <dbReference type="Rhea" id="RHEA-COMP:9663"/>
        <dbReference type="Rhea" id="RHEA-COMP:9680"/>
        <dbReference type="ChEBI" id="CHEBI:15378"/>
        <dbReference type="ChEBI" id="CHEBI:57501"/>
        <dbReference type="ChEBI" id="CHEBI:57783"/>
        <dbReference type="ChEBI" id="CHEBI:58349"/>
        <dbReference type="ChEBI" id="CHEBI:78442"/>
        <dbReference type="ChEBI" id="CHEBI:78520"/>
        <dbReference type="EC" id="1.2.1.70"/>
    </reaction>
</comment>
<comment type="pathway">
    <text evidence="1">Porphyrin-containing compound metabolism; protoporphyrin-IX biosynthesis; 5-aminolevulinate from L-glutamyl-tRNA(Glu): step 1/2.</text>
</comment>
<comment type="subunit">
    <text evidence="1">Homodimer.</text>
</comment>
<comment type="domain">
    <text evidence="1">Possesses an unusual extended V-shaped dimeric structure with each monomer consisting of three distinct domains arranged along a curved 'spinal' alpha-helix. The N-terminal catalytic domain specifically recognizes the glutamate moiety of the substrate. The second domain is the NADPH-binding domain, and the third C-terminal domain is responsible for dimerization.</text>
</comment>
<comment type="miscellaneous">
    <text evidence="1">During catalysis, the active site Cys acts as a nucleophile attacking the alpha-carbonyl group of tRNA-bound glutamate with the formation of a thioester intermediate between enzyme and glutamate, and the concomitant release of tRNA(Glu). The thioester intermediate is finally reduced by direct hydride transfer from NADPH, to form the product GSA.</text>
</comment>
<comment type="similarity">
    <text evidence="1">Belongs to the glutamyl-tRNA reductase family.</text>
</comment>
<dbReference type="EC" id="1.2.1.70" evidence="1"/>
<dbReference type="EMBL" id="AP009179">
    <property type="protein sequence ID" value="BAF71597.1"/>
    <property type="molecule type" value="Genomic_DNA"/>
</dbReference>
<dbReference type="RefSeq" id="WP_011980330.1">
    <property type="nucleotide sequence ID" value="NC_009663.1"/>
</dbReference>
<dbReference type="SMR" id="A6Q7Y8"/>
<dbReference type="STRING" id="387093.SUN_0638"/>
<dbReference type="KEGG" id="sun:SUN_0638"/>
<dbReference type="eggNOG" id="COG0373">
    <property type="taxonomic scope" value="Bacteria"/>
</dbReference>
<dbReference type="HOGENOM" id="CLU_035113_2_2_7"/>
<dbReference type="OrthoDB" id="110209at2"/>
<dbReference type="UniPathway" id="UPA00251">
    <property type="reaction ID" value="UER00316"/>
</dbReference>
<dbReference type="Proteomes" id="UP000006378">
    <property type="component" value="Chromosome"/>
</dbReference>
<dbReference type="GO" id="GO:0008883">
    <property type="term" value="F:glutamyl-tRNA reductase activity"/>
    <property type="evidence" value="ECO:0007669"/>
    <property type="project" value="UniProtKB-UniRule"/>
</dbReference>
<dbReference type="GO" id="GO:0050661">
    <property type="term" value="F:NADP binding"/>
    <property type="evidence" value="ECO:0007669"/>
    <property type="project" value="InterPro"/>
</dbReference>
<dbReference type="GO" id="GO:0006782">
    <property type="term" value="P:protoporphyrinogen IX biosynthetic process"/>
    <property type="evidence" value="ECO:0007669"/>
    <property type="project" value="UniProtKB-UniRule"/>
</dbReference>
<dbReference type="CDD" id="cd05213">
    <property type="entry name" value="NAD_bind_Glutamyl_tRNA_reduct"/>
    <property type="match status" value="1"/>
</dbReference>
<dbReference type="FunFam" id="3.30.460.30:FF:000001">
    <property type="entry name" value="Glutamyl-tRNA reductase"/>
    <property type="match status" value="1"/>
</dbReference>
<dbReference type="Gene3D" id="3.30.460.30">
    <property type="entry name" value="Glutamyl-tRNA reductase, N-terminal domain"/>
    <property type="match status" value="1"/>
</dbReference>
<dbReference type="Gene3D" id="3.40.50.720">
    <property type="entry name" value="NAD(P)-binding Rossmann-like Domain"/>
    <property type="match status" value="1"/>
</dbReference>
<dbReference type="HAMAP" id="MF_00087">
    <property type="entry name" value="Glu_tRNA_reductase"/>
    <property type="match status" value="1"/>
</dbReference>
<dbReference type="InterPro" id="IPR000343">
    <property type="entry name" value="4pyrrol_synth_GluRdtase"/>
</dbReference>
<dbReference type="InterPro" id="IPR015896">
    <property type="entry name" value="4pyrrol_synth_GluRdtase_dimer"/>
</dbReference>
<dbReference type="InterPro" id="IPR015895">
    <property type="entry name" value="4pyrrol_synth_GluRdtase_N"/>
</dbReference>
<dbReference type="InterPro" id="IPR018214">
    <property type="entry name" value="GluRdtase_CS"/>
</dbReference>
<dbReference type="InterPro" id="IPR036453">
    <property type="entry name" value="GluRdtase_dimer_dom_sf"/>
</dbReference>
<dbReference type="InterPro" id="IPR036343">
    <property type="entry name" value="GluRdtase_N_sf"/>
</dbReference>
<dbReference type="InterPro" id="IPR036291">
    <property type="entry name" value="NAD(P)-bd_dom_sf"/>
</dbReference>
<dbReference type="InterPro" id="IPR006151">
    <property type="entry name" value="Shikm_DH/Glu-tRNA_Rdtase"/>
</dbReference>
<dbReference type="NCBIfam" id="TIGR01035">
    <property type="entry name" value="hemA"/>
    <property type="match status" value="1"/>
</dbReference>
<dbReference type="PANTHER" id="PTHR43120">
    <property type="entry name" value="GLUTAMYL-TRNA REDUCTASE 1, CHLOROPLASTIC"/>
    <property type="match status" value="1"/>
</dbReference>
<dbReference type="PANTHER" id="PTHR43120:SF1">
    <property type="entry name" value="GLUTAMYL-TRNA REDUCTASE 1, CHLOROPLASTIC"/>
    <property type="match status" value="1"/>
</dbReference>
<dbReference type="Pfam" id="PF00745">
    <property type="entry name" value="GlutR_dimer"/>
    <property type="match status" value="1"/>
</dbReference>
<dbReference type="Pfam" id="PF05201">
    <property type="entry name" value="GlutR_N"/>
    <property type="match status" value="1"/>
</dbReference>
<dbReference type="Pfam" id="PF01488">
    <property type="entry name" value="Shikimate_DH"/>
    <property type="match status" value="1"/>
</dbReference>
<dbReference type="PIRSF" id="PIRSF000445">
    <property type="entry name" value="4pyrrol_synth_GluRdtase"/>
    <property type="match status" value="1"/>
</dbReference>
<dbReference type="SUPFAM" id="SSF69742">
    <property type="entry name" value="Glutamyl tRNA-reductase catalytic, N-terminal domain"/>
    <property type="match status" value="1"/>
</dbReference>
<dbReference type="SUPFAM" id="SSF69075">
    <property type="entry name" value="Glutamyl tRNA-reductase dimerization domain"/>
    <property type="match status" value="1"/>
</dbReference>
<dbReference type="SUPFAM" id="SSF51735">
    <property type="entry name" value="NAD(P)-binding Rossmann-fold domains"/>
    <property type="match status" value="1"/>
</dbReference>
<dbReference type="PROSITE" id="PS00747">
    <property type="entry name" value="GLUTR"/>
    <property type="match status" value="1"/>
</dbReference>
<organism>
    <name type="scientific">Sulfurovum sp. (strain NBC37-1)</name>
    <dbReference type="NCBI Taxonomy" id="387093"/>
    <lineage>
        <taxon>Bacteria</taxon>
        <taxon>Pseudomonadati</taxon>
        <taxon>Campylobacterota</taxon>
        <taxon>Epsilonproteobacteria</taxon>
        <taxon>Campylobacterales</taxon>
        <taxon>Sulfurovaceae</taxon>
        <taxon>Sulfurovum</taxon>
    </lineage>
</organism>